<comment type="function">
    <text evidence="7 12 14">Involved in nonsense-mediated decay (NMD) of mRNAs containing premature stop codons by associating with the nuclear exon junction complex (EJC). Recruited by UPF3B associated with the EJC core at the cytoplasmic side of the nuclear envelope and the subsequent formation of an UPF1-UPF2-UPF3 surveillance complex (including UPF1 bound to release factors at the stalled ribosome) is believed to activate NMD. In cooperation with UPF3B stimulates both ATPase and RNA helicase activities of UPF1. Binds spliced mRNA.</text>
</comment>
<comment type="subunit">
    <text evidence="5 6 7 8 9 10 11 12 13 15">Found in a post-splicing messenger ribonucleoprotein (mRNP) complex. Associates with the exon junction complex (EJC). Interacts with SMG1, EST1A, UPF1, UPF3A, UPF3B, EIF4A1 and EIF1.</text>
</comment>
<comment type="interaction">
    <interactant intactId="EBI-372073">
        <id>Q9HAU5</id>
    </interactant>
    <interactant intactId="EBI-1053259">
        <id>Q9UHX1</id>
        <label>PUF60</label>
    </interactant>
    <organismsDiffer>false</organismsDiffer>
    <experiments>3</experiments>
</comment>
<comment type="interaction">
    <interactant intactId="EBI-372073">
        <id>Q9HAU5</id>
    </interactant>
    <interactant intactId="EBI-1049832">
        <id>Q96Q15</id>
        <label>SMG1</label>
    </interactant>
    <organismsDiffer>false</organismsDiffer>
    <experiments>7</experiments>
</comment>
<comment type="interaction">
    <interactant intactId="EBI-372073">
        <id>Q9HAU5</id>
    </interactant>
    <interactant intactId="EBI-373471">
        <id>Q92900</id>
        <label>UPF1</label>
    </interactant>
    <organismsDiffer>false</organismsDiffer>
    <experiments>30</experiments>
</comment>
<comment type="interaction">
    <interactant intactId="EBI-372073">
        <id>Q9HAU5</id>
    </interactant>
    <interactant intactId="EBI-373492">
        <id>Q92900-2</id>
        <label>UPF1</label>
    </interactant>
    <organismsDiffer>false</organismsDiffer>
    <experiments>9</experiments>
</comment>
<comment type="interaction">
    <interactant intactId="EBI-372073">
        <id>Q9HAU5</id>
    </interactant>
    <interactant intactId="EBI-521530">
        <id>Q9H1J1</id>
        <label>UPF3A</label>
    </interactant>
    <organismsDiffer>false</organismsDiffer>
    <experiments>5</experiments>
</comment>
<comment type="interaction">
    <interactant intactId="EBI-372073">
        <id>Q9HAU5</id>
    </interactant>
    <interactant intactId="EBI-372780">
        <id>Q9BZI7</id>
        <label>UPF3B</label>
    </interactant>
    <organismsDiffer>false</organismsDiffer>
    <experiments>8</experiments>
</comment>
<comment type="interaction">
    <interactant intactId="EBI-372073">
        <id>Q9HAU5</id>
    </interactant>
    <interactant intactId="EBI-15674130">
        <id>Q9BZI7-2</id>
        <label>UPF3B</label>
    </interactant>
    <organismsDiffer>false</organismsDiffer>
    <experiments>7</experiments>
</comment>
<comment type="subcellular location">
    <subcellularLocation>
        <location evidence="5 6 7">Cytoplasm</location>
        <location evidence="5 6 7">Perinuclear region</location>
    </subcellularLocation>
    <subcellularLocation>
        <location evidence="1">Cytoplasm</location>
    </subcellularLocation>
</comment>
<comment type="tissue specificity">
    <text evidence="5">Ubiquitous.</text>
</comment>
<comment type="sequence caution" evidence="16">
    <conflict type="erroneous initiation">
        <sequence resource="EMBL-CDS" id="BAA92646"/>
    </conflict>
    <text>Extended N-terminus.</text>
</comment>
<comment type="sequence caution" evidence="16">
    <conflict type="miscellaneous discrepancy">
        <sequence resource="EMBL-CDS" id="BAC04721"/>
    </conflict>
    <text>Probable cloning artifact.</text>
</comment>
<sequence>MPAERKKPASMEEKDSLPNNKEKDCSERRTVSSKERPKDDIKLTAKKEVSKAPEDKKKRLEDDKRKKEDKERKKKDEEKVKAEEESKKKEEEEKKKHQEEERKKQEEQAKRQQEEEAAAQMKEKEESIQLHQEAWERHHLRKELRSKNQNAPDSRPEENFFSRLDSSLKKNTAFVKKLKTITEQQRDSLSHDFNGLNLSKYIAEAVASIVEAKLKISDVNCAVHLCSLFHQRYADFAPSLLQVWKKHFEARKEEKTPNITKLRTDLRFIAELTIVGIFTDKEGLSLIYEQLKNIINADRESHTHVSVVISFCRHCGDDIAGLVPRKVKSAAEKFNLSFPPSEIISPEKQQPFQNLLKEYFTSLTKHLKRDHRELQNTERQNRRILHSKGELSEDRHKQYEEFAMSYQKLLANSQSLADLLDENMPDLPQDKPTPEEHGPGIDIFTPGKPGEYDLEGGIWEDEDARNFYENLIDLKAFVPAILFKDNEKSCQNKESNKDDTKEAKESKENKEVSSPDDLELELENLEINDDTLELEGGDEAEDLTKKLLDEQEQEDEEASTGSHLKLIVDAFLQQLPNCVNRDLIDKAAMDFCMNMNTKANRKKLVRALFIVPRQRLDLLPFYARLVATLHPCMSDVAEDLCSMLRGDFRFHVRKKDQINIETKNKTVRFIGELTKFKMFTKNDTLHCLKMLLSDFSHHHIEMACTLLETCGRFLFRSPESHLRTSVLLEQMMRKKQAMHLDARYVTMVENAYYYCNPPPAEKTVKKKRPPLQEYVRKLLYKDLSKVTTEKVLRQMRKLPWQDQEVKDYVICCMINIWNVKYNSIHCVANLLAGLVLYQEDVGIHVVDGVLEDIRLGMEVNQPKFNQRRISSAKFLGELYNYRMVESAVIFRTLYSFTSFGVNPDGSPSSLDPPEHLFRIRLVCTILDTCGQYFDRGSSKRKLDCFLVYFQRYVWWKKSLEVWTKDHPFPIDIDYMISDTLELLRPKIKLCNSLEESIRQVQDLEREFLIKLGLVNDKDSKDSMTEGENLEEDEEEEEGGAETEEQSGNESEVNEPEEEEGSDNDDDEGEEEEEENTDYLTDSNKENETDEENTEVMIKGGGLKHVPCVEDEDFIQALDKMMLENLQQRSGESVKVHQLDVAIPLHLKSQLRKGPPLGGGEGEAESADTMPFVMLTRKGNKQQFKILNVPMSSQLAANHWNQQQAEQEERMRMKKLTLDINERQEQEDYQEMLQSLAQRPAPANTNRERRPRYQHPKGAPNADLIFKTGGRRR</sequence>
<keyword id="KW-0002">3D-structure</keyword>
<keyword id="KW-0175">Coiled coil</keyword>
<keyword id="KW-0963">Cytoplasm</keyword>
<keyword id="KW-0866">Nonsense-mediated mRNA decay</keyword>
<keyword id="KW-0597">Phosphoprotein</keyword>
<keyword id="KW-1267">Proteomics identification</keyword>
<keyword id="KW-1185">Reference proteome</keyword>
<keyword id="KW-0677">Repeat</keyword>
<keyword id="KW-0694">RNA-binding</keyword>
<gene>
    <name evidence="17" type="primary">UPF2</name>
    <name type="synonym">KIAA1408</name>
    <name evidence="17" type="synonym">RENT2</name>
</gene>
<name>RENT2_HUMAN</name>
<accession>Q9HAU5</accession>
<accession>A6NLJ5</accession>
<accession>D3DRS0</accession>
<accession>Q14BM1</accession>
<accession>Q5W0J4</accession>
<accession>Q8N8U1</accession>
<accession>Q9H1J2</accession>
<accession>Q9NWL1</accession>
<accession>Q9P2D9</accession>
<accession>Q9Y4M9</accession>
<reference key="1">
    <citation type="journal article" date="2000" name="Mol. Cell. Biol.">
        <title>Novel Upf2p orthologues suggest a functional link between translation initiation and nonsense surveillance complexes.</title>
        <authorList>
            <person name="Mendell J.T."/>
            <person name="Medghalchi S.M."/>
            <person name="Lake R.G."/>
            <person name="Noensie E.N."/>
            <person name="Dietz H.C."/>
        </authorList>
    </citation>
    <scope>NUCLEOTIDE SEQUENCE [MRNA]</scope>
    <scope>INTERACTION WITH UPF1; EIF4A1 AND EIF1</scope>
    <scope>SUBCELLULAR LOCATION</scope>
    <scope>TISSUE SPECIFICITY</scope>
    <source>
        <tissue>Heart</tissue>
    </source>
</reference>
<reference key="2">
    <citation type="journal article" date="2000" name="Cell">
        <title>Human Upf proteins target an mRNA for nonsense-mediated decay when bound downstream of a termination codon.</title>
        <authorList>
            <person name="Lykke-Andersen J."/>
            <person name="Shu M.-D."/>
            <person name="Steitz J.A."/>
        </authorList>
    </citation>
    <scope>NUCLEOTIDE SEQUENCE [MRNA]</scope>
    <scope>FUNCTION IN NONSENSE-MEDIATED MRNA DECAY</scope>
    <scope>INTERACTION WITH UPF1; UPF3A AND UPF3B</scope>
    <scope>SUBCELLULAR LOCATION</scope>
</reference>
<reference key="3">
    <citation type="journal article" date="2001" name="Mol. Cell. Biol.">
        <title>Identification and characterization of human orthologues to Saccharomyces cerevisiae Upf2 protein and Upf3 protein (Caenorhabditis elegans SMG-4).</title>
        <authorList>
            <person name="Serin G."/>
            <person name="Gersappe A."/>
            <person name="Black J.D."/>
            <person name="Aronoff R."/>
            <person name="Maquat L.E."/>
        </authorList>
    </citation>
    <scope>NUCLEOTIDE SEQUENCE [MRNA]</scope>
    <scope>INTERACTION WITH UPF1; UPF3A AND UPF3B</scope>
    <scope>SUBCELLULAR LOCATION</scope>
    <source>
        <tissue>Cervix carcinoma</tissue>
    </source>
</reference>
<reference key="4">
    <citation type="journal article" date="2000" name="DNA Res.">
        <title>Prediction of the coding sequences of unidentified human genes. XVI. The complete sequences of 150 new cDNA clones from brain which code for large proteins in vitro.</title>
        <authorList>
            <person name="Nagase T."/>
            <person name="Kikuno R."/>
            <person name="Ishikawa K."/>
            <person name="Hirosawa M."/>
            <person name="Ohara O."/>
        </authorList>
    </citation>
    <scope>NUCLEOTIDE SEQUENCE [LARGE SCALE MRNA]</scope>
    <source>
        <tissue>Brain</tissue>
    </source>
</reference>
<reference key="5">
    <citation type="journal article" date="2004" name="Nat. Genet.">
        <title>Complete sequencing and characterization of 21,243 full-length human cDNAs.</title>
        <authorList>
            <person name="Ota T."/>
            <person name="Suzuki Y."/>
            <person name="Nishikawa T."/>
            <person name="Otsuki T."/>
            <person name="Sugiyama T."/>
            <person name="Irie R."/>
            <person name="Wakamatsu A."/>
            <person name="Hayashi K."/>
            <person name="Sato H."/>
            <person name="Nagai K."/>
            <person name="Kimura K."/>
            <person name="Makita H."/>
            <person name="Sekine M."/>
            <person name="Obayashi M."/>
            <person name="Nishi T."/>
            <person name="Shibahara T."/>
            <person name="Tanaka T."/>
            <person name="Ishii S."/>
            <person name="Yamamoto J."/>
            <person name="Saito K."/>
            <person name="Kawai Y."/>
            <person name="Isono Y."/>
            <person name="Nakamura Y."/>
            <person name="Nagahari K."/>
            <person name="Murakami K."/>
            <person name="Yasuda T."/>
            <person name="Iwayanagi T."/>
            <person name="Wagatsuma M."/>
            <person name="Shiratori A."/>
            <person name="Sudo H."/>
            <person name="Hosoiri T."/>
            <person name="Kaku Y."/>
            <person name="Kodaira H."/>
            <person name="Kondo H."/>
            <person name="Sugawara M."/>
            <person name="Takahashi M."/>
            <person name="Kanda K."/>
            <person name="Yokoi T."/>
            <person name="Furuya T."/>
            <person name="Kikkawa E."/>
            <person name="Omura Y."/>
            <person name="Abe K."/>
            <person name="Kamihara K."/>
            <person name="Katsuta N."/>
            <person name="Sato K."/>
            <person name="Tanikawa M."/>
            <person name="Yamazaki M."/>
            <person name="Ninomiya K."/>
            <person name="Ishibashi T."/>
            <person name="Yamashita H."/>
            <person name="Murakawa K."/>
            <person name="Fujimori K."/>
            <person name="Tanai H."/>
            <person name="Kimata M."/>
            <person name="Watanabe M."/>
            <person name="Hiraoka S."/>
            <person name="Chiba Y."/>
            <person name="Ishida S."/>
            <person name="Ono Y."/>
            <person name="Takiguchi S."/>
            <person name="Watanabe S."/>
            <person name="Yosida M."/>
            <person name="Hotuta T."/>
            <person name="Kusano J."/>
            <person name="Kanehori K."/>
            <person name="Takahashi-Fujii A."/>
            <person name="Hara H."/>
            <person name="Tanase T.-O."/>
            <person name="Nomura Y."/>
            <person name="Togiya S."/>
            <person name="Komai F."/>
            <person name="Hara R."/>
            <person name="Takeuchi K."/>
            <person name="Arita M."/>
            <person name="Imose N."/>
            <person name="Musashino K."/>
            <person name="Yuuki H."/>
            <person name="Oshima A."/>
            <person name="Sasaki N."/>
            <person name="Aotsuka S."/>
            <person name="Yoshikawa Y."/>
            <person name="Matsunawa H."/>
            <person name="Ichihara T."/>
            <person name="Shiohata N."/>
            <person name="Sano S."/>
            <person name="Moriya S."/>
            <person name="Momiyama H."/>
            <person name="Satoh N."/>
            <person name="Takami S."/>
            <person name="Terashima Y."/>
            <person name="Suzuki O."/>
            <person name="Nakagawa S."/>
            <person name="Senoh A."/>
            <person name="Mizoguchi H."/>
            <person name="Goto Y."/>
            <person name="Shimizu F."/>
            <person name="Wakebe H."/>
            <person name="Hishigaki H."/>
            <person name="Watanabe T."/>
            <person name="Sugiyama A."/>
            <person name="Takemoto M."/>
            <person name="Kawakami B."/>
            <person name="Yamazaki M."/>
            <person name="Watanabe K."/>
            <person name="Kumagai A."/>
            <person name="Itakura S."/>
            <person name="Fukuzumi Y."/>
            <person name="Fujimori Y."/>
            <person name="Komiyama M."/>
            <person name="Tashiro H."/>
            <person name="Tanigami A."/>
            <person name="Fujiwara T."/>
            <person name="Ono T."/>
            <person name="Yamada K."/>
            <person name="Fujii Y."/>
            <person name="Ozaki K."/>
            <person name="Hirao M."/>
            <person name="Ohmori Y."/>
            <person name="Kawabata A."/>
            <person name="Hikiji T."/>
            <person name="Kobatake N."/>
            <person name="Inagaki H."/>
            <person name="Ikema Y."/>
            <person name="Okamoto S."/>
            <person name="Okitani R."/>
            <person name="Kawakami T."/>
            <person name="Noguchi S."/>
            <person name="Itoh T."/>
            <person name="Shigeta K."/>
            <person name="Senba T."/>
            <person name="Matsumura K."/>
            <person name="Nakajima Y."/>
            <person name="Mizuno T."/>
            <person name="Morinaga M."/>
            <person name="Sasaki M."/>
            <person name="Togashi T."/>
            <person name="Oyama M."/>
            <person name="Hata H."/>
            <person name="Watanabe M."/>
            <person name="Komatsu T."/>
            <person name="Mizushima-Sugano J."/>
            <person name="Satoh T."/>
            <person name="Shirai Y."/>
            <person name="Takahashi Y."/>
            <person name="Nakagawa K."/>
            <person name="Okumura K."/>
            <person name="Nagase T."/>
            <person name="Nomura N."/>
            <person name="Kikuchi H."/>
            <person name="Masuho Y."/>
            <person name="Yamashita R."/>
            <person name="Nakai K."/>
            <person name="Yada T."/>
            <person name="Nakamura Y."/>
            <person name="Ohara O."/>
            <person name="Isogai T."/>
            <person name="Sugano S."/>
        </authorList>
    </citation>
    <scope>NUCLEOTIDE SEQUENCE [LARGE SCALE MRNA]</scope>
    <scope>NUCLEOTIDE SEQUENCE [LARGE SCALE MRNA] OF 1023-1272</scope>
</reference>
<reference key="6">
    <citation type="journal article" date="2003" name="Nature">
        <title>The DNA sequence and analysis of human chromosome 6.</title>
        <authorList>
            <person name="Mungall A.J."/>
            <person name="Palmer S.A."/>
            <person name="Sims S.K."/>
            <person name="Edwards C.A."/>
            <person name="Ashurst J.L."/>
            <person name="Wilming L."/>
            <person name="Jones M.C."/>
            <person name="Horton R."/>
            <person name="Hunt S.E."/>
            <person name="Scott C.E."/>
            <person name="Gilbert J.G.R."/>
            <person name="Clamp M.E."/>
            <person name="Bethel G."/>
            <person name="Milne S."/>
            <person name="Ainscough R."/>
            <person name="Almeida J.P."/>
            <person name="Ambrose K.D."/>
            <person name="Andrews T.D."/>
            <person name="Ashwell R.I.S."/>
            <person name="Babbage A.K."/>
            <person name="Bagguley C.L."/>
            <person name="Bailey J."/>
            <person name="Banerjee R."/>
            <person name="Barker D.J."/>
            <person name="Barlow K.F."/>
            <person name="Bates K."/>
            <person name="Beare D.M."/>
            <person name="Beasley H."/>
            <person name="Beasley O."/>
            <person name="Bird C.P."/>
            <person name="Blakey S.E."/>
            <person name="Bray-Allen S."/>
            <person name="Brook J."/>
            <person name="Brown A.J."/>
            <person name="Brown J.Y."/>
            <person name="Burford D.C."/>
            <person name="Burrill W."/>
            <person name="Burton J."/>
            <person name="Carder C."/>
            <person name="Carter N.P."/>
            <person name="Chapman J.C."/>
            <person name="Clark S.Y."/>
            <person name="Clark G."/>
            <person name="Clee C.M."/>
            <person name="Clegg S."/>
            <person name="Cobley V."/>
            <person name="Collier R.E."/>
            <person name="Collins J.E."/>
            <person name="Colman L.K."/>
            <person name="Corby N.R."/>
            <person name="Coville G.J."/>
            <person name="Culley K.M."/>
            <person name="Dhami P."/>
            <person name="Davies J."/>
            <person name="Dunn M."/>
            <person name="Earthrowl M.E."/>
            <person name="Ellington A.E."/>
            <person name="Evans K.A."/>
            <person name="Faulkner L."/>
            <person name="Francis M.D."/>
            <person name="Frankish A."/>
            <person name="Frankland J."/>
            <person name="French L."/>
            <person name="Garner P."/>
            <person name="Garnett J."/>
            <person name="Ghori M.J."/>
            <person name="Gilby L.M."/>
            <person name="Gillson C.J."/>
            <person name="Glithero R.J."/>
            <person name="Grafham D.V."/>
            <person name="Grant M."/>
            <person name="Gribble S."/>
            <person name="Griffiths C."/>
            <person name="Griffiths M.N.D."/>
            <person name="Hall R."/>
            <person name="Halls K.S."/>
            <person name="Hammond S."/>
            <person name="Harley J.L."/>
            <person name="Hart E.A."/>
            <person name="Heath P.D."/>
            <person name="Heathcott R."/>
            <person name="Holmes S.J."/>
            <person name="Howden P.J."/>
            <person name="Howe K.L."/>
            <person name="Howell G.R."/>
            <person name="Huckle E."/>
            <person name="Humphray S.J."/>
            <person name="Humphries M.D."/>
            <person name="Hunt A.R."/>
            <person name="Johnson C.M."/>
            <person name="Joy A.A."/>
            <person name="Kay M."/>
            <person name="Keenan S.J."/>
            <person name="Kimberley A.M."/>
            <person name="King A."/>
            <person name="Laird G.K."/>
            <person name="Langford C."/>
            <person name="Lawlor S."/>
            <person name="Leongamornlert D.A."/>
            <person name="Leversha M."/>
            <person name="Lloyd C.R."/>
            <person name="Lloyd D.M."/>
            <person name="Loveland J.E."/>
            <person name="Lovell J."/>
            <person name="Martin S."/>
            <person name="Mashreghi-Mohammadi M."/>
            <person name="Maslen G.L."/>
            <person name="Matthews L."/>
            <person name="McCann O.T."/>
            <person name="McLaren S.J."/>
            <person name="McLay K."/>
            <person name="McMurray A."/>
            <person name="Moore M.J.F."/>
            <person name="Mullikin J.C."/>
            <person name="Niblett D."/>
            <person name="Nickerson T."/>
            <person name="Novik K.L."/>
            <person name="Oliver K."/>
            <person name="Overton-Larty E.K."/>
            <person name="Parker A."/>
            <person name="Patel R."/>
            <person name="Pearce A.V."/>
            <person name="Peck A.I."/>
            <person name="Phillimore B.J.C.T."/>
            <person name="Phillips S."/>
            <person name="Plumb R.W."/>
            <person name="Porter K.M."/>
            <person name="Ramsey Y."/>
            <person name="Ranby S.A."/>
            <person name="Rice C.M."/>
            <person name="Ross M.T."/>
            <person name="Searle S.M."/>
            <person name="Sehra H.K."/>
            <person name="Sheridan E."/>
            <person name="Skuce C.D."/>
            <person name="Smith S."/>
            <person name="Smith M."/>
            <person name="Spraggon L."/>
            <person name="Squares S.L."/>
            <person name="Steward C.A."/>
            <person name="Sycamore N."/>
            <person name="Tamlyn-Hall G."/>
            <person name="Tester J."/>
            <person name="Theaker A.J."/>
            <person name="Thomas D.W."/>
            <person name="Thorpe A."/>
            <person name="Tracey A."/>
            <person name="Tromans A."/>
            <person name="Tubby B."/>
            <person name="Wall M."/>
            <person name="Wallis J.M."/>
            <person name="West A.P."/>
            <person name="White S.S."/>
            <person name="Whitehead S.L."/>
            <person name="Whittaker H."/>
            <person name="Wild A."/>
            <person name="Willey D.J."/>
            <person name="Wilmer T.E."/>
            <person name="Wood J.M."/>
            <person name="Wray P.W."/>
            <person name="Wyatt J.C."/>
            <person name="Young L."/>
            <person name="Younger R.M."/>
            <person name="Bentley D.R."/>
            <person name="Coulson A."/>
            <person name="Durbin R.M."/>
            <person name="Hubbard T."/>
            <person name="Sulston J.E."/>
            <person name="Dunham I."/>
            <person name="Rogers J."/>
            <person name="Beck S."/>
        </authorList>
    </citation>
    <scope>NUCLEOTIDE SEQUENCE [LARGE SCALE GENOMIC DNA]</scope>
</reference>
<reference key="7">
    <citation type="submission" date="2005-09" db="EMBL/GenBank/DDBJ databases">
        <authorList>
            <person name="Mural R.J."/>
            <person name="Istrail S."/>
            <person name="Sutton G.G."/>
            <person name="Florea L."/>
            <person name="Halpern A.L."/>
            <person name="Mobarry C.M."/>
            <person name="Lippert R."/>
            <person name="Walenz B."/>
            <person name="Shatkay H."/>
            <person name="Dew I."/>
            <person name="Miller J.R."/>
            <person name="Flanigan M.J."/>
            <person name="Edwards N.J."/>
            <person name="Bolanos R."/>
            <person name="Fasulo D."/>
            <person name="Halldorsson B.V."/>
            <person name="Hannenhalli S."/>
            <person name="Turner R."/>
            <person name="Yooseph S."/>
            <person name="Lu F."/>
            <person name="Nusskern D.R."/>
            <person name="Shue B.C."/>
            <person name="Zheng X.H."/>
            <person name="Zhong F."/>
            <person name="Delcher A.L."/>
            <person name="Huson D.H."/>
            <person name="Kravitz S.A."/>
            <person name="Mouchard L."/>
            <person name="Reinert K."/>
            <person name="Remington K.A."/>
            <person name="Clark A.G."/>
            <person name="Waterman M.S."/>
            <person name="Eichler E.E."/>
            <person name="Adams M.D."/>
            <person name="Hunkapiller M.W."/>
            <person name="Myers E.W."/>
            <person name="Venter J.C."/>
        </authorList>
    </citation>
    <scope>NUCLEOTIDE SEQUENCE [LARGE SCALE GENOMIC DNA]</scope>
</reference>
<reference key="8">
    <citation type="journal article" date="2004" name="Genome Res.">
        <title>The status, quality, and expansion of the NIH full-length cDNA project: the Mammalian Gene Collection (MGC).</title>
        <authorList>
            <consortium name="The MGC Project Team"/>
        </authorList>
    </citation>
    <scope>NUCLEOTIDE SEQUENCE [LARGE SCALE MRNA]</scope>
</reference>
<reference key="9">
    <citation type="journal article" date="2007" name="BMC Genomics">
        <title>The full-ORF clone resource of the German cDNA consortium.</title>
        <authorList>
            <person name="Bechtel S."/>
            <person name="Rosenfelder H."/>
            <person name="Duda A."/>
            <person name="Schmidt C.P."/>
            <person name="Ernst U."/>
            <person name="Wellenreuther R."/>
            <person name="Mehrle A."/>
            <person name="Schuster C."/>
            <person name="Bahr A."/>
            <person name="Bloecker H."/>
            <person name="Heubner D."/>
            <person name="Hoerlein A."/>
            <person name="Michel G."/>
            <person name="Wedler H."/>
            <person name="Koehrer K."/>
            <person name="Ottenwaelder B."/>
            <person name="Poustka A."/>
            <person name="Wiemann S."/>
            <person name="Schupp I."/>
        </authorList>
    </citation>
    <scope>NUCLEOTIDE SEQUENCE [LARGE SCALE MRNA] OF 576-1272</scope>
    <source>
        <tissue>Testis</tissue>
    </source>
</reference>
<reference key="10">
    <citation type="journal article" date="2001" name="Genes Dev.">
        <title>Human SMG-1, a novel phosphatidylinositol 3-kinase-related protein kinase, associates with components of the mRNA surveillance complex and is involved in the regulation of nonsense-mediated mRNA decay.</title>
        <authorList>
            <person name="Yamashita A."/>
            <person name="Ohnishi T."/>
            <person name="Kashima I."/>
            <person name="Taya Y."/>
            <person name="Ohno S."/>
        </authorList>
    </citation>
    <scope>INTERACTION WITH SMG1</scope>
</reference>
<reference key="11">
    <citation type="journal article" date="2001" name="Science">
        <title>Communication of the position of exon-exon junctions to the mRNA surveillance machinery by the protein RNPS1.</title>
        <authorList>
            <person name="Lykke-Andersen J."/>
            <person name="Shu M.-D."/>
            <person name="Steitz J.A."/>
        </authorList>
    </citation>
    <scope>IDENTIFICATION IN A POST-SPLICING MRNP COMPLEX</scope>
</reference>
<reference key="12">
    <citation type="journal article" date="2003" name="RNA">
        <title>Characterization of human Smg5/7a: a protein with similarities to Caenorhabditis elegans SMG5 and SMG7 that functions in the dephosphorylation of Upf1.</title>
        <authorList>
            <person name="Chiu S.-Y."/>
            <person name="Serin G."/>
            <person name="Ohara O."/>
            <person name="Maquat L.E."/>
        </authorList>
    </citation>
    <scope>INTERACTION WITH EST1A</scope>
</reference>
<reference key="13">
    <citation type="journal article" date="2005" name="Mol. Cell">
        <title>Exon-junction complex components specify distinct routes of nonsense-mediated mRNA decay with differential cofactor requirements.</title>
        <authorList>
            <person name="Gehring N.H."/>
            <person name="Kunz J.B."/>
            <person name="Neu-Yilik G."/>
            <person name="Breit S."/>
            <person name="Viegas M.H."/>
            <person name="Hentze M.W."/>
            <person name="Kulozik A.E."/>
        </authorList>
    </citation>
    <scope>FUNCTION IN NONSENSE-MEDIATED MRNA DECAY</scope>
    <scope>IDENTIFICATION IN A COMPLEX WITH UPF3B AND RNPS1</scope>
</reference>
<reference key="14">
    <citation type="journal article" date="2006" name="Genes Dev.">
        <title>Binding of a novel SMG-1-Upf1-eRF1-eRF3 complex (SURF) to the exon junction complex triggers Upf1 phosphorylation and nonsense-mediated mRNA decay.</title>
        <authorList>
            <person name="Kashima I."/>
            <person name="Yamashita A."/>
            <person name="Izumi N."/>
            <person name="Kataoka N."/>
            <person name="Morishita R."/>
            <person name="Hoshino S."/>
            <person name="Ohno M."/>
            <person name="Dreyfuss G."/>
            <person name="Ohno S."/>
        </authorList>
    </citation>
    <scope>SUBUNIT</scope>
    <scope>MUTAGENESIS OF GLU-858</scope>
</reference>
<reference key="15">
    <citation type="journal article" date="2008" name="Nat. Struct. Mol. Biol.">
        <title>NMD factors UPF2 and UPF3 bridge UPF1 to the exon junction complex and stimulate its RNA helicase activity.</title>
        <authorList>
            <person name="Chamieh H."/>
            <person name="Ballut L."/>
            <person name="Bonneau F."/>
            <person name="Le Hir H."/>
        </authorList>
    </citation>
    <scope>FUNCTION</scope>
    <scope>RECONSTITUTION OF THE EJC CORE-UPF COMPLEX</scope>
</reference>
<reference key="16">
    <citation type="journal article" date="2011" name="BMC Syst. Biol.">
        <title>Initial characterization of the human central proteome.</title>
        <authorList>
            <person name="Burkard T.R."/>
            <person name="Planyavsky M."/>
            <person name="Kaupe I."/>
            <person name="Breitwieser F.P."/>
            <person name="Buerckstuemmer T."/>
            <person name="Bennett K.L."/>
            <person name="Superti-Furga G."/>
            <person name="Colinge J."/>
        </authorList>
    </citation>
    <scope>IDENTIFICATION BY MASS SPECTROMETRY [LARGE SCALE ANALYSIS]</scope>
</reference>
<reference key="17">
    <citation type="journal article" date="2011" name="Sci. Signal.">
        <title>System-wide temporal characterization of the proteome and phosphoproteome of human embryonic stem cell differentiation.</title>
        <authorList>
            <person name="Rigbolt K.T."/>
            <person name="Prokhorova T.A."/>
            <person name="Akimov V."/>
            <person name="Henningsen J."/>
            <person name="Johansen P.T."/>
            <person name="Kratchmarova I."/>
            <person name="Kassem M."/>
            <person name="Mann M."/>
            <person name="Olsen J.V."/>
            <person name="Blagoev B."/>
        </authorList>
    </citation>
    <scope>PHOSPHORYLATION [LARGE SCALE ANALYSIS] AT THR-1088</scope>
    <scope>IDENTIFICATION BY MASS SPECTROMETRY [LARGE SCALE ANALYSIS]</scope>
</reference>
<reference key="18">
    <citation type="journal article" date="2013" name="J. Proteome Res.">
        <title>Toward a comprehensive characterization of a human cancer cell phosphoproteome.</title>
        <authorList>
            <person name="Zhou H."/>
            <person name="Di Palma S."/>
            <person name="Preisinger C."/>
            <person name="Peng M."/>
            <person name="Polat A.N."/>
            <person name="Heck A.J."/>
            <person name="Mohammed S."/>
        </authorList>
    </citation>
    <scope>PHOSPHORYLATION [LARGE SCALE ANALYSIS] AT THR-1088</scope>
    <scope>IDENTIFICATION BY MASS SPECTROMETRY [LARGE SCALE ANALYSIS]</scope>
    <source>
        <tissue>Erythroleukemia</tissue>
    </source>
</reference>
<reference key="19">
    <citation type="journal article" date="2004" name="Nat. Struct. Mol. Biol.">
        <title>The structural basis for the interaction between nonsense-mediated mRNA decay factors UPF2 and UPF3.</title>
        <authorList>
            <person name="Kadlec J."/>
            <person name="Izaurralde E."/>
            <person name="Cusack S."/>
        </authorList>
    </citation>
    <scope>X-RAY CRYSTALLOGRAPHY (1.95 ANGSTROMS) OF 768-1015 IN COMPLEX WITH UPF3B RNP-LIKE DOMAIN</scope>
    <scope>RNA-BINDING</scope>
    <scope>MUTAGENESIS OF 796-ARG-ARG-797; ASP-847; 851-GLU-ASP-852; ARG-854; GLU-858; TYR-894 AND TYR-932</scope>
</reference>
<reference key="20">
    <citation type="journal article" date="2009" name="EMBO J.">
        <title>Unusual bipartite mode of interaction between the nonsense-mediated decay factors, UPF1 and UPF2.</title>
        <authorList>
            <person name="Clerici M."/>
            <person name="Mourao A."/>
            <person name="Gutsche I."/>
            <person name="Gehring N.H."/>
            <person name="Hentze M.W."/>
            <person name="Kulozik A."/>
            <person name="Kadlec J."/>
            <person name="Sattler M."/>
            <person name="Cusack S."/>
        </authorList>
    </citation>
    <scope>X-RAY CRYSTALLOGRAPHY (2.5 ANGSTROMS) OF 1105-1198 IN COMPLEX WITH UPF1</scope>
    <scope>MUTAGENESIS OF PHE-1113; MET-1120; MET-1121; GLU-1123; MET-1169; PHE-1171; MET-1173; LEU-1174 AND ARG-1176</scope>
</reference>
<proteinExistence type="evidence at protein level"/>
<organism>
    <name type="scientific">Homo sapiens</name>
    <name type="common">Human</name>
    <dbReference type="NCBI Taxonomy" id="9606"/>
    <lineage>
        <taxon>Eukaryota</taxon>
        <taxon>Metazoa</taxon>
        <taxon>Chordata</taxon>
        <taxon>Craniata</taxon>
        <taxon>Vertebrata</taxon>
        <taxon>Euteleostomi</taxon>
        <taxon>Mammalia</taxon>
        <taxon>Eutheria</taxon>
        <taxon>Euarchontoglires</taxon>
        <taxon>Primates</taxon>
        <taxon>Haplorrhini</taxon>
        <taxon>Catarrhini</taxon>
        <taxon>Hominidae</taxon>
        <taxon>Homo</taxon>
    </lineage>
</organism>
<evidence type="ECO:0000250" key="1">
    <source>
        <dbReference type="UniProtKB" id="A2AT37"/>
    </source>
</evidence>
<evidence type="ECO:0000250" key="2">
    <source>
        <dbReference type="UniProtKB" id="P38798"/>
    </source>
</evidence>
<evidence type="ECO:0000255" key="3"/>
<evidence type="ECO:0000256" key="4">
    <source>
        <dbReference type="SAM" id="MobiDB-lite"/>
    </source>
</evidence>
<evidence type="ECO:0000269" key="5">
    <source>
    </source>
</evidence>
<evidence type="ECO:0000269" key="6">
    <source>
    </source>
</evidence>
<evidence type="ECO:0000269" key="7">
    <source>
    </source>
</evidence>
<evidence type="ECO:0000269" key="8">
    <source>
    </source>
</evidence>
<evidence type="ECO:0000269" key="9">
    <source>
    </source>
</evidence>
<evidence type="ECO:0000269" key="10">
    <source>
    </source>
</evidence>
<evidence type="ECO:0000269" key="11">
    <source>
    </source>
</evidence>
<evidence type="ECO:0000269" key="12">
    <source>
    </source>
</evidence>
<evidence type="ECO:0000269" key="13">
    <source>
    </source>
</evidence>
<evidence type="ECO:0000269" key="14">
    <source>
    </source>
</evidence>
<evidence type="ECO:0000269" key="15">
    <source>
    </source>
</evidence>
<evidence type="ECO:0000305" key="16"/>
<evidence type="ECO:0000312" key="17">
    <source>
        <dbReference type="HGNC" id="HGNC:17854"/>
    </source>
</evidence>
<evidence type="ECO:0007744" key="18">
    <source>
    </source>
</evidence>
<evidence type="ECO:0007744" key="19">
    <source>
    </source>
</evidence>
<evidence type="ECO:0007829" key="20">
    <source>
        <dbReference type="PDB" id="1UW4"/>
    </source>
</evidence>
<evidence type="ECO:0007829" key="21">
    <source>
        <dbReference type="PDB" id="2WJV"/>
    </source>
</evidence>
<evidence type="ECO:0007829" key="22">
    <source>
        <dbReference type="PDB" id="4CEK"/>
    </source>
</evidence>
<evidence type="ECO:0007829" key="23">
    <source>
        <dbReference type="PDB" id="4CEM"/>
    </source>
</evidence>
<evidence type="ECO:0007829" key="24">
    <source>
        <dbReference type="PDB" id="7NWU"/>
    </source>
</evidence>
<feature type="chain" id="PRO_0000097248" description="Regulator of nonsense transcripts 2">
    <location>
        <begin position="1"/>
        <end position="1272"/>
    </location>
</feature>
<feature type="domain" description="MIF4G 1">
    <location>
        <begin position="168"/>
        <end position="431"/>
    </location>
</feature>
<feature type="domain" description="MIF4G 2">
    <location>
        <begin position="569"/>
        <end position="758"/>
    </location>
</feature>
<feature type="domain" description="MIF4G 3">
    <location>
        <begin position="773"/>
        <end position="986"/>
    </location>
</feature>
<feature type="region of interest" description="Disordered" evidence="4">
    <location>
        <begin position="1"/>
        <end position="126"/>
    </location>
</feature>
<feature type="region of interest" description="Sufficient for interaction with UPF1">
    <location>
        <begin position="94"/>
        <end position="133"/>
    </location>
</feature>
<feature type="region of interest" description="Disordered" evidence="4">
    <location>
        <begin position="370"/>
        <end position="389"/>
    </location>
</feature>
<feature type="region of interest" description="Disordered" evidence="4">
    <location>
        <begin position="423"/>
        <end position="445"/>
    </location>
</feature>
<feature type="region of interest" description="Disordered" evidence="4">
    <location>
        <begin position="490"/>
        <end position="517"/>
    </location>
</feature>
<feature type="region of interest" description="Sufficient for interaction with UPF3A and UPF3B">
    <location>
        <begin position="711"/>
        <end position="928"/>
    </location>
</feature>
<feature type="region of interest" description="Sufficient for interaction with EIF4A1 and EIF1" evidence="5">
    <location>
        <begin position="757"/>
        <end position="1272"/>
    </location>
</feature>
<feature type="region of interest" description="Binds to UPF3B">
    <location>
        <begin position="839"/>
        <end position="859"/>
    </location>
</feature>
<feature type="region of interest" description="Disordered" evidence="4">
    <location>
        <begin position="1018"/>
        <end position="1098"/>
    </location>
</feature>
<feature type="region of interest" description="Sufficient for interaction with UPF1 C-terminus">
    <location>
        <begin position="1084"/>
        <end position="1272"/>
    </location>
</feature>
<feature type="region of interest" description="Necessary for interaction with UPF1">
    <location>
        <begin position="1105"/>
        <end position="1198"/>
    </location>
</feature>
<feature type="region of interest" description="Interaction with UPF1">
    <location>
        <begin position="1105"/>
        <end position="1129"/>
    </location>
</feature>
<feature type="region of interest" description="Interaction with UPF1">
    <location>
        <begin position="1167"/>
        <end position="1207"/>
    </location>
</feature>
<feature type="region of interest" description="Disordered" evidence="4">
    <location>
        <begin position="1220"/>
        <end position="1272"/>
    </location>
</feature>
<feature type="coiled-coil region" evidence="3">
    <location>
        <begin position="54"/>
        <end position="134"/>
    </location>
</feature>
<feature type="coiled-coil region" evidence="3">
    <location>
        <begin position="487"/>
        <end position="559"/>
    </location>
</feature>
<feature type="compositionally biased region" description="Basic and acidic residues" evidence="4">
    <location>
        <begin position="1"/>
        <end position="114"/>
    </location>
</feature>
<feature type="compositionally biased region" description="Basic and acidic residues" evidence="4">
    <location>
        <begin position="428"/>
        <end position="439"/>
    </location>
</feature>
<feature type="compositionally biased region" description="Basic and acidic residues" evidence="4">
    <location>
        <begin position="490"/>
        <end position="513"/>
    </location>
</feature>
<feature type="compositionally biased region" description="Acidic residues" evidence="4">
    <location>
        <begin position="1027"/>
        <end position="1076"/>
    </location>
</feature>
<feature type="modified residue" description="Phosphothreonine" evidence="18 19">
    <location>
        <position position="1088"/>
    </location>
</feature>
<feature type="sequence variant" id="VAR_024345" description="In dbSNP:rs7079388.">
    <original>N</original>
    <variation>S</variation>
    <location>
        <position position="496"/>
    </location>
</feature>
<feature type="mutagenesis site" description="Strongly impairs RNA-binding." evidence="11">
    <original>RK</original>
    <variation>EE</variation>
    <location>
        <begin position="796"/>
        <end position="797"/>
    </location>
</feature>
<feature type="mutagenesis site" description="Does not abolish interaction with UPF3B." evidence="11">
    <original>D</original>
    <variation>K</variation>
    <location>
        <position position="847"/>
    </location>
</feature>
<feature type="mutagenesis site" description="Does not abolish interaction with UPF3B. Does not abolish interaction with UPF3B; when associated with D-854." evidence="11">
    <original>ED</original>
    <variation>KR</variation>
    <location>
        <begin position="851"/>
        <end position="852"/>
    </location>
</feature>
<feature type="mutagenesis site" description="Does not abolish interaction with UPF3B; when associated with K-851 and R-852." evidence="11">
    <original>R</original>
    <variation>D</variation>
    <location>
        <position position="854"/>
    </location>
</feature>
<feature type="mutagenesis site" description="Abolishes interaction with UPF3B and association with SMG1 and RBM8A; reduces phosphorylation of UPF1." evidence="11 13">
    <original>E</original>
    <variation>R</variation>
    <location>
        <position position="858"/>
    </location>
</feature>
<feature type="mutagenesis site" description="Does not impair RNA-binding; when associated with A-932." evidence="11">
    <original>Y</original>
    <variation>A</variation>
    <location>
        <position position="894"/>
    </location>
</feature>
<feature type="mutagenesis site" description="Does not impair RNA-binding; when associated with A-894." evidence="11">
    <original>Y</original>
    <variation>A</variation>
    <location>
        <position position="932"/>
    </location>
</feature>
<feature type="mutagenesis site" description="Abolishes interaction with UPF1." evidence="15">
    <original>F</original>
    <variation>E</variation>
    <location>
        <position position="1113"/>
    </location>
</feature>
<feature type="mutagenesis site" description="Decreases interaction with UPF1; does not reduce NMD efficiency." evidence="15">
    <original>M</original>
    <variation>E</variation>
    <location>
        <position position="1120"/>
    </location>
</feature>
<feature type="mutagenesis site" description="Decreases interaction with UPF1; does not reduce NMD efficiency." evidence="15">
    <original>M</original>
    <variation>E</variation>
    <location>
        <position position="1121"/>
    </location>
</feature>
<feature type="mutagenesis site" description="Decreases interaction with UPF1." evidence="15">
    <original>E</original>
    <variation>R</variation>
    <location>
        <position position="1123"/>
    </location>
</feature>
<feature type="mutagenesis site" description="Decreases interaction with UPF1." evidence="15">
    <original>M</original>
    <variation>E</variation>
    <location>
        <position position="1169"/>
    </location>
</feature>
<feature type="mutagenesis site" description="Abolishes interaction with UPF1; reduces NMD efficiency." evidence="15">
    <original>F</original>
    <variation>E</variation>
    <location>
        <position position="1171"/>
    </location>
</feature>
<feature type="mutagenesis site" description="Greatly reduces NMD efficiency; when associated with E-1173 and E-1174." evidence="15">
    <original>F</original>
    <variation>E</variation>
    <location>
        <position position="1171"/>
    </location>
</feature>
<feature type="mutagenesis site" description="Abolishes interaction with UPF1." evidence="15">
    <original>M</original>
    <variation>E</variation>
    <location>
        <position position="1173"/>
    </location>
</feature>
<feature type="mutagenesis site" description="Greatly reduces NMD efficiency; when associated with E-1171 and E-1174." evidence="15">
    <original>M</original>
    <variation>E</variation>
    <location>
        <position position="1173"/>
    </location>
</feature>
<feature type="mutagenesis site" description="Abolishes interaction with UPF1; reduces NMD efficiency." evidence="15">
    <original>L</original>
    <variation>E</variation>
    <location>
        <position position="1174"/>
    </location>
</feature>
<feature type="mutagenesis site" description="Greatly reduces NMD efficiency; when associated with E-1171 and E-1173." evidence="15">
    <original>L</original>
    <variation>E</variation>
    <location>
        <position position="1174"/>
    </location>
</feature>
<feature type="mutagenesis site" description="Decreases interaction with UPF1." evidence="15">
    <original>R</original>
    <variation>E</variation>
    <location>
        <position position="1176"/>
    </location>
</feature>
<feature type="sequence conflict" description="In Ref. 5; BAC04721." evidence="16" ref="5">
    <original>A</original>
    <variation>T</variation>
    <location>
        <position position="119"/>
    </location>
</feature>
<feature type="sequence conflict" description="In Ref. 5; BAC04721." evidence="16" ref="5">
    <original>F</original>
    <variation>L</variation>
    <location>
        <position position="338"/>
    </location>
</feature>
<feature type="sequence conflict" description="In Ref. 2; AAG48509 and 4; BAA92646." evidence="16" ref="2 4">
    <original>H</original>
    <variation>Q</variation>
    <location>
        <position position="844"/>
    </location>
</feature>
<feature type="sequence conflict" description="In Ref. 4; BAA92646." evidence="16" ref="4">
    <original>P</original>
    <variation>S</variation>
    <location>
        <position position="969"/>
    </location>
</feature>
<feature type="helix" evidence="23">
    <location>
        <begin position="122"/>
        <end position="149"/>
    </location>
</feature>
<feature type="helix" evidence="23">
    <location>
        <begin position="152"/>
        <end position="154"/>
    </location>
</feature>
<feature type="helix" evidence="23">
    <location>
        <begin position="158"/>
        <end position="162"/>
    </location>
</feature>
<feature type="helix" evidence="23">
    <location>
        <begin position="168"/>
        <end position="177"/>
    </location>
</feature>
<feature type="helix" evidence="23">
    <location>
        <begin position="178"/>
        <end position="180"/>
    </location>
</feature>
<feature type="helix" evidence="23">
    <location>
        <begin position="183"/>
        <end position="185"/>
    </location>
</feature>
<feature type="helix" evidence="23">
    <location>
        <begin position="186"/>
        <end position="195"/>
    </location>
</feature>
<feature type="helix" evidence="23">
    <location>
        <begin position="202"/>
        <end position="211"/>
    </location>
</feature>
<feature type="helix" evidence="23">
    <location>
        <begin position="216"/>
        <end position="218"/>
    </location>
</feature>
<feature type="helix" evidence="23">
    <location>
        <begin position="219"/>
        <end position="232"/>
    </location>
</feature>
<feature type="helix" evidence="23">
    <location>
        <begin position="236"/>
        <end position="253"/>
    </location>
</feature>
<feature type="helix" evidence="23">
    <location>
        <begin position="259"/>
        <end position="274"/>
    </location>
</feature>
<feature type="helix" evidence="23">
    <location>
        <begin position="280"/>
        <end position="297"/>
    </location>
</feature>
<feature type="strand" evidence="23">
    <location>
        <begin position="299"/>
        <end position="301"/>
    </location>
</feature>
<feature type="helix" evidence="23">
    <location>
        <begin position="305"/>
        <end position="320"/>
    </location>
</feature>
<feature type="helix" evidence="23">
    <location>
        <begin position="325"/>
        <end position="334"/>
    </location>
</feature>
<feature type="helix" evidence="23">
    <location>
        <begin position="346"/>
        <end position="375"/>
    </location>
</feature>
<feature type="turn" evidence="23">
    <location>
        <begin position="376"/>
        <end position="382"/>
    </location>
</feature>
<feature type="helix" evidence="23">
    <location>
        <begin position="383"/>
        <end position="386"/>
    </location>
</feature>
<feature type="turn" evidence="23">
    <location>
        <begin position="387"/>
        <end position="389"/>
    </location>
</feature>
<feature type="turn" evidence="23">
    <location>
        <begin position="395"/>
        <end position="398"/>
    </location>
</feature>
<feature type="helix" evidence="23">
    <location>
        <begin position="399"/>
        <end position="419"/>
    </location>
</feature>
<feature type="strand" evidence="22">
    <location>
        <begin position="460"/>
        <end position="462"/>
    </location>
</feature>
<feature type="helix" evidence="22">
    <location>
        <begin position="463"/>
        <end position="469"/>
    </location>
</feature>
<feature type="helix" evidence="22">
    <location>
        <begin position="474"/>
        <end position="476"/>
    </location>
</feature>
<feature type="helix" evidence="22">
    <location>
        <begin position="539"/>
        <end position="549"/>
    </location>
</feature>
<feature type="helix" evidence="22">
    <location>
        <begin position="560"/>
        <end position="574"/>
    </location>
</feature>
<feature type="helix" evidence="22">
    <location>
        <begin position="575"/>
        <end position="577"/>
    </location>
</feature>
<feature type="helix" evidence="22">
    <location>
        <begin position="581"/>
        <end position="594"/>
    </location>
</feature>
<feature type="helix" evidence="22">
    <location>
        <begin position="598"/>
        <end position="609"/>
    </location>
</feature>
<feature type="helix" evidence="22">
    <location>
        <begin position="613"/>
        <end position="618"/>
    </location>
</feature>
<feature type="helix" evidence="22">
    <location>
        <begin position="619"/>
        <end position="629"/>
    </location>
</feature>
<feature type="turn" evidence="22">
    <location>
        <begin position="630"/>
        <end position="632"/>
    </location>
</feature>
<feature type="helix" evidence="22">
    <location>
        <begin position="635"/>
        <end position="653"/>
    </location>
</feature>
<feature type="helix" evidence="22">
    <location>
        <begin position="660"/>
        <end position="675"/>
    </location>
</feature>
<feature type="helix" evidence="22">
    <location>
        <begin position="681"/>
        <end position="693"/>
    </location>
</feature>
<feature type="helix" evidence="22">
    <location>
        <begin position="697"/>
        <end position="716"/>
    </location>
</feature>
<feature type="helix" evidence="22">
    <location>
        <begin position="718"/>
        <end position="737"/>
    </location>
</feature>
<feature type="helix" evidence="22">
    <location>
        <begin position="742"/>
        <end position="755"/>
    </location>
</feature>
<feature type="helix" evidence="20">
    <location>
        <begin position="770"/>
        <end position="780"/>
    </location>
</feature>
<feature type="helix" evidence="24">
    <location>
        <begin position="782"/>
        <end position="785"/>
    </location>
</feature>
<feature type="helix" evidence="20">
    <location>
        <begin position="788"/>
        <end position="796"/>
    </location>
</feature>
<feature type="helix" evidence="20">
    <location>
        <begin position="803"/>
        <end position="814"/>
    </location>
</feature>
<feature type="helix" evidence="20">
    <location>
        <begin position="816"/>
        <end position="818"/>
    </location>
</feature>
<feature type="helix" evidence="20">
    <location>
        <begin position="821"/>
        <end position="823"/>
    </location>
</feature>
<feature type="helix" evidence="20">
    <location>
        <begin position="824"/>
        <end position="834"/>
    </location>
</feature>
<feature type="turn" evidence="20">
    <location>
        <begin position="835"/>
        <end position="837"/>
    </location>
</feature>
<feature type="helix" evidence="20">
    <location>
        <begin position="839"/>
        <end position="859"/>
    </location>
</feature>
<feature type="helix" evidence="20">
    <location>
        <begin position="862"/>
        <end position="864"/>
    </location>
</feature>
<feature type="helix" evidence="20">
    <location>
        <begin position="865"/>
        <end position="880"/>
    </location>
</feature>
<feature type="helix" evidence="20">
    <location>
        <begin position="886"/>
        <end position="898"/>
    </location>
</feature>
<feature type="strand" evidence="20">
    <location>
        <begin position="909"/>
        <end position="911"/>
    </location>
</feature>
<feature type="helix" evidence="20">
    <location>
        <begin position="917"/>
        <end position="929"/>
    </location>
</feature>
<feature type="helix" evidence="20">
    <location>
        <begin position="930"/>
        <end position="932"/>
    </location>
</feature>
<feature type="helix" evidence="20">
    <location>
        <begin position="936"/>
        <end position="957"/>
    </location>
</feature>
<feature type="strand" evidence="20">
    <location>
        <begin position="964"/>
        <end position="966"/>
    </location>
</feature>
<feature type="helix" evidence="20">
    <location>
        <begin position="970"/>
        <end position="983"/>
    </location>
</feature>
<feature type="helix" evidence="20">
    <location>
        <begin position="993"/>
        <end position="1011"/>
    </location>
</feature>
<feature type="helix" evidence="21">
    <location>
        <begin position="1108"/>
        <end position="1126"/>
    </location>
</feature>
<feature type="strand" evidence="21">
    <location>
        <begin position="1168"/>
        <end position="1174"/>
    </location>
</feature>
<feature type="strand" evidence="21">
    <location>
        <begin position="1183"/>
        <end position="1192"/>
    </location>
</feature>
<feature type="helix" evidence="21">
    <location>
        <begin position="1193"/>
        <end position="1197"/>
    </location>
</feature>
<protein>
    <recommendedName>
        <fullName evidence="17">Regulator of nonsense transcripts 2</fullName>
    </recommendedName>
    <alternativeName>
        <fullName evidence="2">Up-frameshift suppressor 2 homolog</fullName>
        <shortName>hUpf2</shortName>
    </alternativeName>
</protein>
<dbReference type="EMBL" id="AF301013">
    <property type="protein sequence ID" value="AAG33225.1"/>
    <property type="molecule type" value="mRNA"/>
</dbReference>
<dbReference type="EMBL" id="AY013249">
    <property type="protein sequence ID" value="AAG48509.1"/>
    <property type="molecule type" value="mRNA"/>
</dbReference>
<dbReference type="EMBL" id="AF318574">
    <property type="protein sequence ID" value="AAG60689.1"/>
    <property type="molecule type" value="mRNA"/>
</dbReference>
<dbReference type="EMBL" id="AB037829">
    <property type="protein sequence ID" value="BAA92646.1"/>
    <property type="status" value="ALT_INIT"/>
    <property type="molecule type" value="mRNA"/>
</dbReference>
<dbReference type="EMBL" id="AK000764">
    <property type="protein sequence ID" value="BAA91369.1"/>
    <property type="molecule type" value="mRNA"/>
</dbReference>
<dbReference type="EMBL" id="AK096191">
    <property type="protein sequence ID" value="BAC04721.1"/>
    <property type="status" value="ALT_SEQ"/>
    <property type="molecule type" value="mRNA"/>
</dbReference>
<dbReference type="EMBL" id="AC073160">
    <property type="status" value="NOT_ANNOTATED_CDS"/>
    <property type="molecule type" value="Genomic_DNA"/>
</dbReference>
<dbReference type="EMBL" id="AL138898">
    <property type="status" value="NOT_ANNOTATED_CDS"/>
    <property type="molecule type" value="Genomic_DNA"/>
</dbReference>
<dbReference type="EMBL" id="AL645617">
    <property type="status" value="NOT_ANNOTATED_CDS"/>
    <property type="molecule type" value="Genomic_DNA"/>
</dbReference>
<dbReference type="EMBL" id="CH471072">
    <property type="protein sequence ID" value="EAW86329.1"/>
    <property type="molecule type" value="Genomic_DNA"/>
</dbReference>
<dbReference type="EMBL" id="CH471072">
    <property type="protein sequence ID" value="EAW86330.1"/>
    <property type="molecule type" value="Genomic_DNA"/>
</dbReference>
<dbReference type="EMBL" id="CH471072">
    <property type="protein sequence ID" value="EAW86332.1"/>
    <property type="molecule type" value="Genomic_DNA"/>
</dbReference>
<dbReference type="EMBL" id="CH471072">
    <property type="protein sequence ID" value="EAW86333.1"/>
    <property type="molecule type" value="Genomic_DNA"/>
</dbReference>
<dbReference type="EMBL" id="BC114964">
    <property type="protein sequence ID" value="AAI14965.1"/>
    <property type="molecule type" value="mRNA"/>
</dbReference>
<dbReference type="EMBL" id="BC115737">
    <property type="protein sequence ID" value="AAI15738.1"/>
    <property type="molecule type" value="mRNA"/>
</dbReference>
<dbReference type="EMBL" id="AL080198">
    <property type="protein sequence ID" value="CAB45771.1"/>
    <property type="molecule type" value="mRNA"/>
</dbReference>
<dbReference type="CCDS" id="CCDS7086.1"/>
<dbReference type="PIR" id="T12507">
    <property type="entry name" value="T12507"/>
</dbReference>
<dbReference type="RefSeq" id="NP_056357.1">
    <property type="nucleotide sequence ID" value="NM_015542.4"/>
</dbReference>
<dbReference type="RefSeq" id="NP_542166.1">
    <property type="nucleotide sequence ID" value="NM_080599.3"/>
</dbReference>
<dbReference type="PDB" id="1UW4">
    <property type="method" value="X-ray"/>
    <property type="resolution" value="1.95 A"/>
    <property type="chains" value="B/D=768-1015"/>
</dbReference>
<dbReference type="PDB" id="2WJV">
    <property type="method" value="X-ray"/>
    <property type="resolution" value="2.85 A"/>
    <property type="chains" value="D/E=1105-1198"/>
</dbReference>
<dbReference type="PDB" id="4CEK">
    <property type="method" value="X-ray"/>
    <property type="resolution" value="2.35 A"/>
    <property type="chains" value="A=455-757"/>
</dbReference>
<dbReference type="PDB" id="4CEM">
    <property type="method" value="X-ray"/>
    <property type="resolution" value="2.60 A"/>
    <property type="chains" value="A/B=121-486"/>
</dbReference>
<dbReference type="PDB" id="7NWU">
    <property type="method" value="X-ray"/>
    <property type="resolution" value="2.60 A"/>
    <property type="chains" value="B/D/F/H=767-1017"/>
</dbReference>
<dbReference type="PDB" id="7QG6">
    <property type="method" value="X-ray"/>
    <property type="resolution" value="2.95 A"/>
    <property type="chains" value="B/D/F/H=761-1054"/>
</dbReference>
<dbReference type="PDBsum" id="1UW4"/>
<dbReference type="PDBsum" id="2WJV"/>
<dbReference type="PDBsum" id="4CEK"/>
<dbReference type="PDBsum" id="4CEM"/>
<dbReference type="PDBsum" id="7NWU"/>
<dbReference type="PDBsum" id="7QG6"/>
<dbReference type="EMDB" id="EMD-2665"/>
<dbReference type="EMDB" id="EMD-2666"/>
<dbReference type="SMR" id="Q9HAU5"/>
<dbReference type="BioGRID" id="117490">
    <property type="interactions" value="194"/>
</dbReference>
<dbReference type="CORUM" id="Q9HAU5"/>
<dbReference type="DIP" id="DIP-31148N"/>
<dbReference type="FunCoup" id="Q9HAU5">
    <property type="interactions" value="4009"/>
</dbReference>
<dbReference type="IntAct" id="Q9HAU5">
    <property type="interactions" value="57"/>
</dbReference>
<dbReference type="MINT" id="Q9HAU5"/>
<dbReference type="STRING" id="9606.ENSP00000348708"/>
<dbReference type="MoonDB" id="Q9HAU5">
    <property type="type" value="Predicted"/>
</dbReference>
<dbReference type="CarbonylDB" id="Q9HAU5"/>
<dbReference type="GlyGen" id="Q9HAU5">
    <property type="glycosylation" value="1 site, 1 O-linked glycan (1 site)"/>
</dbReference>
<dbReference type="iPTMnet" id="Q9HAU5"/>
<dbReference type="MetOSite" id="Q9HAU5"/>
<dbReference type="PhosphoSitePlus" id="Q9HAU5"/>
<dbReference type="SwissPalm" id="Q9HAU5"/>
<dbReference type="BioMuta" id="UPF2"/>
<dbReference type="DMDM" id="60390647"/>
<dbReference type="jPOST" id="Q9HAU5"/>
<dbReference type="MassIVE" id="Q9HAU5"/>
<dbReference type="PaxDb" id="9606-ENSP00000348708"/>
<dbReference type="PeptideAtlas" id="Q9HAU5"/>
<dbReference type="Pumba" id="Q9HAU5"/>
<dbReference type="Antibodypedia" id="24600">
    <property type="antibodies" value="166 antibodies from 27 providers"/>
</dbReference>
<dbReference type="DNASU" id="26019"/>
<dbReference type="Ensembl" id="ENST00000356352.6">
    <property type="protein sequence ID" value="ENSP00000348708.2"/>
    <property type="gene ID" value="ENSG00000151461.20"/>
</dbReference>
<dbReference type="Ensembl" id="ENST00000357604.10">
    <property type="protein sequence ID" value="ENSP00000350221.5"/>
    <property type="gene ID" value="ENSG00000151461.20"/>
</dbReference>
<dbReference type="Ensembl" id="ENST00000397053.6">
    <property type="protein sequence ID" value="ENSP00000380244.2"/>
    <property type="gene ID" value="ENSG00000151461.20"/>
</dbReference>
<dbReference type="GeneID" id="26019"/>
<dbReference type="KEGG" id="hsa:26019"/>
<dbReference type="MANE-Select" id="ENST00000357604.10">
    <property type="protein sequence ID" value="ENSP00000350221.5"/>
    <property type="RefSeq nucleotide sequence ID" value="NM_015542.4"/>
    <property type="RefSeq protein sequence ID" value="NP_056357.1"/>
</dbReference>
<dbReference type="UCSC" id="uc001ila.3">
    <property type="organism name" value="human"/>
</dbReference>
<dbReference type="AGR" id="HGNC:17854"/>
<dbReference type="CTD" id="26019"/>
<dbReference type="DisGeNET" id="26019"/>
<dbReference type="GeneCards" id="UPF2"/>
<dbReference type="HGNC" id="HGNC:17854">
    <property type="gene designation" value="UPF2"/>
</dbReference>
<dbReference type="HPA" id="ENSG00000151461">
    <property type="expression patterns" value="Low tissue specificity"/>
</dbReference>
<dbReference type="MIM" id="605529">
    <property type="type" value="gene"/>
</dbReference>
<dbReference type="neXtProt" id="NX_Q9HAU5"/>
<dbReference type="OpenTargets" id="ENSG00000151461"/>
<dbReference type="PharmGKB" id="PA134945630"/>
<dbReference type="VEuPathDB" id="HostDB:ENSG00000151461"/>
<dbReference type="eggNOG" id="KOG2051">
    <property type="taxonomic scope" value="Eukaryota"/>
</dbReference>
<dbReference type="GeneTree" id="ENSGT00530000064318"/>
<dbReference type="HOGENOM" id="CLU_002633_2_1_1"/>
<dbReference type="InParanoid" id="Q9HAU5"/>
<dbReference type="OMA" id="DFQHHQI"/>
<dbReference type="OrthoDB" id="27832at2759"/>
<dbReference type="PAN-GO" id="Q9HAU5">
    <property type="GO annotations" value="4 GO annotations based on evolutionary models"/>
</dbReference>
<dbReference type="PhylomeDB" id="Q9HAU5"/>
<dbReference type="TreeFam" id="TF300543"/>
<dbReference type="PathwayCommons" id="Q9HAU5"/>
<dbReference type="Reactome" id="R-HSA-9010553">
    <property type="pathway name" value="Regulation of expression of SLITs and ROBOs"/>
</dbReference>
<dbReference type="Reactome" id="R-HSA-975957">
    <property type="pathway name" value="Nonsense Mediated Decay (NMD) enhanced by the Exon Junction Complex (EJC)"/>
</dbReference>
<dbReference type="SignaLink" id="Q9HAU5"/>
<dbReference type="SIGNOR" id="Q9HAU5"/>
<dbReference type="BioGRID-ORCS" id="26019">
    <property type="hits" value="779 hits in 1178 CRISPR screens"/>
</dbReference>
<dbReference type="CD-CODE" id="DEE660B4">
    <property type="entry name" value="Stress granule"/>
</dbReference>
<dbReference type="ChiTaRS" id="UPF2">
    <property type="organism name" value="human"/>
</dbReference>
<dbReference type="EvolutionaryTrace" id="Q9HAU5"/>
<dbReference type="GeneWiki" id="UPF2"/>
<dbReference type="GenomeRNAi" id="26019"/>
<dbReference type="Pharos" id="Q9HAU5">
    <property type="development level" value="Tbio"/>
</dbReference>
<dbReference type="PRO" id="PR:Q9HAU5"/>
<dbReference type="Proteomes" id="UP000005640">
    <property type="component" value="Chromosome 10"/>
</dbReference>
<dbReference type="RNAct" id="Q9HAU5">
    <property type="molecule type" value="protein"/>
</dbReference>
<dbReference type="Bgee" id="ENSG00000151461">
    <property type="expression patterns" value="Expressed in sural nerve and 218 other cell types or tissues"/>
</dbReference>
<dbReference type="GO" id="GO:0005737">
    <property type="term" value="C:cytoplasm"/>
    <property type="evidence" value="ECO:0000314"/>
    <property type="project" value="HGNC-UCL"/>
</dbReference>
<dbReference type="GO" id="GO:0036464">
    <property type="term" value="C:cytoplasmic ribonucleoprotein granule"/>
    <property type="evidence" value="ECO:0000314"/>
    <property type="project" value="HPA"/>
</dbReference>
<dbReference type="GO" id="GO:0005829">
    <property type="term" value="C:cytosol"/>
    <property type="evidence" value="ECO:0000314"/>
    <property type="project" value="HPA"/>
</dbReference>
<dbReference type="GO" id="GO:0035145">
    <property type="term" value="C:exon-exon junction complex"/>
    <property type="evidence" value="ECO:0000314"/>
    <property type="project" value="UniProtKB"/>
</dbReference>
<dbReference type="GO" id="GO:0005634">
    <property type="term" value="C:nucleus"/>
    <property type="evidence" value="ECO:0000314"/>
    <property type="project" value="HGNC-UCL"/>
</dbReference>
<dbReference type="GO" id="GO:0048471">
    <property type="term" value="C:perinuclear region of cytoplasm"/>
    <property type="evidence" value="ECO:0007669"/>
    <property type="project" value="UniProtKB-SubCell"/>
</dbReference>
<dbReference type="GO" id="GO:0003723">
    <property type="term" value="F:RNA binding"/>
    <property type="evidence" value="ECO:0007669"/>
    <property type="project" value="UniProtKB-KW"/>
</dbReference>
<dbReference type="GO" id="GO:0042162">
    <property type="term" value="F:telomeric DNA binding"/>
    <property type="evidence" value="ECO:0000314"/>
    <property type="project" value="BHF-UCL"/>
</dbReference>
<dbReference type="GO" id="GO:0031100">
    <property type="term" value="P:animal organ regeneration"/>
    <property type="evidence" value="ECO:0007669"/>
    <property type="project" value="Ensembl"/>
</dbReference>
<dbReference type="GO" id="GO:0001889">
    <property type="term" value="P:liver development"/>
    <property type="evidence" value="ECO:0007669"/>
    <property type="project" value="Ensembl"/>
</dbReference>
<dbReference type="GO" id="GO:0006406">
    <property type="term" value="P:mRNA export from nucleus"/>
    <property type="evidence" value="ECO:0000304"/>
    <property type="project" value="HGNC-UCL"/>
</dbReference>
<dbReference type="GO" id="GO:0000184">
    <property type="term" value="P:nuclear-transcribed mRNA catabolic process, nonsense-mediated decay"/>
    <property type="evidence" value="ECO:0000315"/>
    <property type="project" value="UniProtKB"/>
</dbReference>
<dbReference type="DisProt" id="DP00949"/>
<dbReference type="FunFam" id="1.25.40.180:FF:000014">
    <property type="entry name" value="Putative regulator of nonsense transcripts 2"/>
    <property type="match status" value="1"/>
</dbReference>
<dbReference type="FunFam" id="4.10.80.160:FF:000002">
    <property type="entry name" value="Putative regulator of nonsense transcripts 2"/>
    <property type="match status" value="1"/>
</dbReference>
<dbReference type="FunFam" id="1.25.40.180:FF:000015">
    <property type="entry name" value="regulator of nonsense transcripts 2 isoform X1"/>
    <property type="match status" value="1"/>
</dbReference>
<dbReference type="FunFam" id="1.25.40.180:FF:000023">
    <property type="entry name" value="regulator of nonsense transcripts 2 isoform X1"/>
    <property type="match status" value="1"/>
</dbReference>
<dbReference type="Gene3D" id="1.25.40.180">
    <property type="match status" value="3"/>
</dbReference>
<dbReference type="Gene3D" id="4.10.80.160">
    <property type="match status" value="1"/>
</dbReference>
<dbReference type="Gene3D" id="6.10.250.770">
    <property type="match status" value="1"/>
</dbReference>
<dbReference type="IDEAL" id="IID00252"/>
<dbReference type="InterPro" id="IPR016024">
    <property type="entry name" value="ARM-type_fold"/>
</dbReference>
<dbReference type="InterPro" id="IPR003890">
    <property type="entry name" value="MIF4G-like_typ-3"/>
</dbReference>
<dbReference type="InterPro" id="IPR039762">
    <property type="entry name" value="Nmd2/UPF2"/>
</dbReference>
<dbReference type="InterPro" id="IPR007193">
    <property type="entry name" value="Upf2/Nmd2_C"/>
</dbReference>
<dbReference type="PANTHER" id="PTHR12839">
    <property type="entry name" value="NONSENSE-MEDIATED MRNA DECAY PROTEIN 2 UP-FRAMESHIFT SUPPRESSOR 2"/>
    <property type="match status" value="1"/>
</dbReference>
<dbReference type="PANTHER" id="PTHR12839:SF7">
    <property type="entry name" value="REGULATOR OF NONSENSE TRANSCRIPTS 2"/>
    <property type="match status" value="1"/>
</dbReference>
<dbReference type="Pfam" id="PF02854">
    <property type="entry name" value="MIF4G"/>
    <property type="match status" value="3"/>
</dbReference>
<dbReference type="Pfam" id="PF04050">
    <property type="entry name" value="Upf2"/>
    <property type="match status" value="1"/>
</dbReference>
<dbReference type="SMART" id="SM00543">
    <property type="entry name" value="MIF4G"/>
    <property type="match status" value="3"/>
</dbReference>
<dbReference type="SUPFAM" id="SSF48371">
    <property type="entry name" value="ARM repeat"/>
    <property type="match status" value="3"/>
</dbReference>